<evidence type="ECO:0000255" key="1">
    <source>
        <dbReference type="HAMAP-Rule" id="MF_00104"/>
    </source>
</evidence>
<dbReference type="EC" id="3.1.26.3" evidence="1"/>
<dbReference type="EMBL" id="CP001488">
    <property type="protein sequence ID" value="ACO00461.1"/>
    <property type="molecule type" value="Genomic_DNA"/>
</dbReference>
<dbReference type="SMR" id="C0RI03"/>
<dbReference type="KEGG" id="bmi:BMEA_A0698"/>
<dbReference type="HOGENOM" id="CLU_000907_1_1_5"/>
<dbReference type="Proteomes" id="UP000001748">
    <property type="component" value="Chromosome I"/>
</dbReference>
<dbReference type="GO" id="GO:0005737">
    <property type="term" value="C:cytoplasm"/>
    <property type="evidence" value="ECO:0007669"/>
    <property type="project" value="UniProtKB-SubCell"/>
</dbReference>
<dbReference type="GO" id="GO:0003725">
    <property type="term" value="F:double-stranded RNA binding"/>
    <property type="evidence" value="ECO:0007669"/>
    <property type="project" value="TreeGrafter"/>
</dbReference>
<dbReference type="GO" id="GO:0046872">
    <property type="term" value="F:metal ion binding"/>
    <property type="evidence" value="ECO:0007669"/>
    <property type="project" value="UniProtKB-KW"/>
</dbReference>
<dbReference type="GO" id="GO:0004525">
    <property type="term" value="F:ribonuclease III activity"/>
    <property type="evidence" value="ECO:0007669"/>
    <property type="project" value="UniProtKB-UniRule"/>
</dbReference>
<dbReference type="GO" id="GO:0019843">
    <property type="term" value="F:rRNA binding"/>
    <property type="evidence" value="ECO:0007669"/>
    <property type="project" value="UniProtKB-KW"/>
</dbReference>
<dbReference type="GO" id="GO:0006397">
    <property type="term" value="P:mRNA processing"/>
    <property type="evidence" value="ECO:0007669"/>
    <property type="project" value="UniProtKB-UniRule"/>
</dbReference>
<dbReference type="GO" id="GO:0010468">
    <property type="term" value="P:regulation of gene expression"/>
    <property type="evidence" value="ECO:0007669"/>
    <property type="project" value="TreeGrafter"/>
</dbReference>
<dbReference type="GO" id="GO:0006364">
    <property type="term" value="P:rRNA processing"/>
    <property type="evidence" value="ECO:0007669"/>
    <property type="project" value="UniProtKB-UniRule"/>
</dbReference>
<dbReference type="GO" id="GO:0008033">
    <property type="term" value="P:tRNA processing"/>
    <property type="evidence" value="ECO:0007669"/>
    <property type="project" value="UniProtKB-KW"/>
</dbReference>
<dbReference type="CDD" id="cd10845">
    <property type="entry name" value="DSRM_RNAse_III_family"/>
    <property type="match status" value="1"/>
</dbReference>
<dbReference type="CDD" id="cd00593">
    <property type="entry name" value="RIBOc"/>
    <property type="match status" value="1"/>
</dbReference>
<dbReference type="FunFam" id="3.30.160.20:FF:000003">
    <property type="entry name" value="Ribonuclease 3"/>
    <property type="match status" value="1"/>
</dbReference>
<dbReference type="Gene3D" id="3.30.160.20">
    <property type="match status" value="1"/>
</dbReference>
<dbReference type="Gene3D" id="1.10.1520.10">
    <property type="entry name" value="Ribonuclease III domain"/>
    <property type="match status" value="1"/>
</dbReference>
<dbReference type="HAMAP" id="MF_00104">
    <property type="entry name" value="RNase_III"/>
    <property type="match status" value="1"/>
</dbReference>
<dbReference type="InterPro" id="IPR014720">
    <property type="entry name" value="dsRBD_dom"/>
</dbReference>
<dbReference type="InterPro" id="IPR011907">
    <property type="entry name" value="RNase_III"/>
</dbReference>
<dbReference type="InterPro" id="IPR000999">
    <property type="entry name" value="RNase_III_dom"/>
</dbReference>
<dbReference type="InterPro" id="IPR036389">
    <property type="entry name" value="RNase_III_sf"/>
</dbReference>
<dbReference type="NCBIfam" id="TIGR02191">
    <property type="entry name" value="RNaseIII"/>
    <property type="match status" value="1"/>
</dbReference>
<dbReference type="PANTHER" id="PTHR11207:SF0">
    <property type="entry name" value="RIBONUCLEASE 3"/>
    <property type="match status" value="1"/>
</dbReference>
<dbReference type="PANTHER" id="PTHR11207">
    <property type="entry name" value="RIBONUCLEASE III"/>
    <property type="match status" value="1"/>
</dbReference>
<dbReference type="Pfam" id="PF00035">
    <property type="entry name" value="dsrm"/>
    <property type="match status" value="1"/>
</dbReference>
<dbReference type="Pfam" id="PF14622">
    <property type="entry name" value="Ribonucleas_3_3"/>
    <property type="match status" value="1"/>
</dbReference>
<dbReference type="SMART" id="SM00358">
    <property type="entry name" value="DSRM"/>
    <property type="match status" value="1"/>
</dbReference>
<dbReference type="SMART" id="SM00535">
    <property type="entry name" value="RIBOc"/>
    <property type="match status" value="1"/>
</dbReference>
<dbReference type="SUPFAM" id="SSF54768">
    <property type="entry name" value="dsRNA-binding domain-like"/>
    <property type="match status" value="1"/>
</dbReference>
<dbReference type="SUPFAM" id="SSF69065">
    <property type="entry name" value="RNase III domain-like"/>
    <property type="match status" value="1"/>
</dbReference>
<dbReference type="PROSITE" id="PS50137">
    <property type="entry name" value="DS_RBD"/>
    <property type="match status" value="1"/>
</dbReference>
<dbReference type="PROSITE" id="PS00517">
    <property type="entry name" value="RNASE_3_1"/>
    <property type="match status" value="1"/>
</dbReference>
<dbReference type="PROSITE" id="PS50142">
    <property type="entry name" value="RNASE_3_2"/>
    <property type="match status" value="1"/>
</dbReference>
<name>RNC_BRUMB</name>
<protein>
    <recommendedName>
        <fullName evidence="1">Ribonuclease 3</fullName>
        <ecNumber evidence="1">3.1.26.3</ecNumber>
    </recommendedName>
    <alternativeName>
        <fullName evidence="1">Ribonuclease III</fullName>
        <shortName evidence="1">RNase III</shortName>
    </alternativeName>
</protein>
<accession>C0RI03</accession>
<proteinExistence type="inferred from homology"/>
<organism>
    <name type="scientific">Brucella melitensis biotype 2 (strain ATCC 23457)</name>
    <dbReference type="NCBI Taxonomy" id="546272"/>
    <lineage>
        <taxon>Bacteria</taxon>
        <taxon>Pseudomonadati</taxon>
        <taxon>Pseudomonadota</taxon>
        <taxon>Alphaproteobacteria</taxon>
        <taxon>Hyphomicrobiales</taxon>
        <taxon>Brucellaceae</taxon>
        <taxon>Brucella/Ochrobactrum group</taxon>
        <taxon>Brucella</taxon>
    </lineage>
</organism>
<reference key="1">
    <citation type="submission" date="2009-03" db="EMBL/GenBank/DDBJ databases">
        <title>Brucella melitensis ATCC 23457 whole genome shotgun sequencing project.</title>
        <authorList>
            <person name="Setubal J.C."/>
            <person name="Boyle S."/>
            <person name="Crasta O.R."/>
            <person name="Gillespie J.J."/>
            <person name="Kenyon R.W."/>
            <person name="Lu J."/>
            <person name="Mane S."/>
            <person name="Nagrani S."/>
            <person name="Shallom J.M."/>
            <person name="Shallom S."/>
            <person name="Shukla M."/>
            <person name="Snyder E.E."/>
            <person name="Sobral B.W."/>
            <person name="Wattam A.R."/>
            <person name="Will R."/>
            <person name="Williams K."/>
            <person name="Yoo H."/>
            <person name="Munk C."/>
            <person name="Tapia R."/>
            <person name="Han C."/>
            <person name="Detter J.C."/>
            <person name="Bruce D."/>
            <person name="Brettin T.S."/>
        </authorList>
    </citation>
    <scope>NUCLEOTIDE SEQUENCE [LARGE SCALE GENOMIC DNA]</scope>
    <source>
        <strain>ATCC 23457</strain>
    </source>
</reference>
<sequence>MNRTRPLPEIKMVSANKTASILEERTGHRFLNLKRLERALTHSSVQAPARANYERLEFLGDRVLGLTVAEMLFEAFPEASEGELSVRLNALVNAETCAAIADEIGLADLIHTGSDIKSLNDKRLLNVRADVVEALIATIYLDGGLEAARSFIQRYWKKRSLETGAARRDAKTELQEWAHQQGNVHPVYAILSRSGPDHDPLFLVEVTVKGFAPEKGEGRSKRIAEQSAAEAMLYREGVWKRDGSA</sequence>
<gene>
    <name evidence="1" type="primary">rnc</name>
    <name type="ordered locus">BMEA_A0698</name>
</gene>
<feature type="chain" id="PRO_1000194413" description="Ribonuclease 3">
    <location>
        <begin position="1"/>
        <end position="245"/>
    </location>
</feature>
<feature type="domain" description="RNase III" evidence="1">
    <location>
        <begin position="19"/>
        <end position="144"/>
    </location>
</feature>
<feature type="domain" description="DRBM" evidence="1">
    <location>
        <begin position="169"/>
        <end position="238"/>
    </location>
</feature>
<feature type="active site" evidence="1">
    <location>
        <position position="61"/>
    </location>
</feature>
<feature type="active site" evidence="1">
    <location>
        <position position="133"/>
    </location>
</feature>
<feature type="binding site" evidence="1">
    <location>
        <position position="57"/>
    </location>
    <ligand>
        <name>Mg(2+)</name>
        <dbReference type="ChEBI" id="CHEBI:18420"/>
    </ligand>
</feature>
<feature type="binding site" evidence="1">
    <location>
        <position position="130"/>
    </location>
    <ligand>
        <name>Mg(2+)</name>
        <dbReference type="ChEBI" id="CHEBI:18420"/>
    </ligand>
</feature>
<feature type="binding site" evidence="1">
    <location>
        <position position="133"/>
    </location>
    <ligand>
        <name>Mg(2+)</name>
        <dbReference type="ChEBI" id="CHEBI:18420"/>
    </ligand>
</feature>
<keyword id="KW-0963">Cytoplasm</keyword>
<keyword id="KW-0255">Endonuclease</keyword>
<keyword id="KW-0378">Hydrolase</keyword>
<keyword id="KW-0460">Magnesium</keyword>
<keyword id="KW-0479">Metal-binding</keyword>
<keyword id="KW-0507">mRNA processing</keyword>
<keyword id="KW-0540">Nuclease</keyword>
<keyword id="KW-0694">RNA-binding</keyword>
<keyword id="KW-0698">rRNA processing</keyword>
<keyword id="KW-0699">rRNA-binding</keyword>
<keyword id="KW-0819">tRNA processing</keyword>
<comment type="function">
    <text evidence="1">Digests double-stranded RNA. Involved in the processing of primary rRNA transcript to yield the immediate precursors to the large and small rRNAs (23S and 16S). Processes some mRNAs, and tRNAs when they are encoded in the rRNA operon. Processes pre-crRNA and tracrRNA of type II CRISPR loci if present in the organism.</text>
</comment>
<comment type="catalytic activity">
    <reaction evidence="1">
        <text>Endonucleolytic cleavage to 5'-phosphomonoester.</text>
        <dbReference type="EC" id="3.1.26.3"/>
    </reaction>
</comment>
<comment type="cofactor">
    <cofactor evidence="1">
        <name>Mg(2+)</name>
        <dbReference type="ChEBI" id="CHEBI:18420"/>
    </cofactor>
</comment>
<comment type="subunit">
    <text evidence="1">Homodimer.</text>
</comment>
<comment type="subcellular location">
    <subcellularLocation>
        <location evidence="1">Cytoplasm</location>
    </subcellularLocation>
</comment>
<comment type="similarity">
    <text evidence="1">Belongs to the ribonuclease III family.</text>
</comment>